<evidence type="ECO:0000255" key="1">
    <source>
        <dbReference type="PROSITE-ProRule" id="PRU00041"/>
    </source>
</evidence>
<evidence type="ECO:0000255" key="2">
    <source>
        <dbReference type="PROSITE-ProRule" id="PRU00159"/>
    </source>
</evidence>
<evidence type="ECO:0000255" key="3">
    <source>
        <dbReference type="PROSITE-ProRule" id="PRU00226"/>
    </source>
</evidence>
<evidence type="ECO:0000255" key="4">
    <source>
        <dbReference type="PROSITE-ProRule" id="PRU00618"/>
    </source>
</evidence>
<evidence type="ECO:0000255" key="5">
    <source>
        <dbReference type="PROSITE-ProRule" id="PRU10027"/>
    </source>
</evidence>
<evidence type="ECO:0000256" key="6">
    <source>
        <dbReference type="SAM" id="MobiDB-lite"/>
    </source>
</evidence>
<evidence type="ECO:0000269" key="7">
    <source>
    </source>
</evidence>
<evidence type="ECO:0000303" key="8">
    <source>
    </source>
</evidence>
<evidence type="ECO:0000305" key="9"/>
<evidence type="ECO:0000312" key="10">
    <source>
        <dbReference type="WormBase" id="E01H11.1a"/>
    </source>
</evidence>
<evidence type="ECO:0000312" key="11">
    <source>
        <dbReference type="WormBase" id="E01H11.1b"/>
    </source>
</evidence>
<evidence type="ECO:0000312" key="12">
    <source>
        <dbReference type="WormBase" id="E01H11.1c"/>
    </source>
</evidence>
<sequence>MSLSTNSSVKEDEAQRIEGKAFVRRGALRQKNVHEIKSHKFIARFFKQPTFCSHCKDFLWGITKQGFQCQVCTLVVHKRCHEFVNFACPGADKGVDTDDPRQQHKWKVQTYSSPTFCDHCGSLLYGILHQGMKCQSCDTNVHHRCVKNVPNMCGTDNTEKRGRLRIEAHIENDQLTIKILEAKNLIPMDPNGLSDPYVKCKLIPEDSGCKSKQKTKTLRATLNPQWNETFTYKLLPGDKDRRLSIEVWDWDRTSRNDFMGSLSFGISELMKEAASGWYKLLSAEEGEFYNINITPEYDEDMEKVRKKMNENFITRDNSSSKPKDPAAPRASTLPLGSSNHNVIKASDFNFLTVLGKGSFGKVLLGEQKTTKELFAIKVLKKDVIIQDDDVECTMTEKRVLALPEKPSFLVALHSCFQTMDRLYFVMEFVNGGDLMYQIQQVGKFKEPVAVFYAAEIAVGLFFLHSKGIIYRDLKLDNVMLERDGHIKITDFGMCKENIFGDATTKTFCGTPDYIAPEIILYQPYGKSVDWWAYGVLLFEMLAGQPPFDGEDEDELFTAITEHNVSYPKSLSKEAVSLCKALLIKNPSKRLGCTGDDESASRDIKEHPFFRRIDWFKIETRQIQPPFKPKLKTDRSTENFDHSFLKLPTKMTPPDWEVLENLKGDEFSNFSFVNPFYVKDVEP</sequence>
<organism>
    <name type="scientific">Caenorhabditis elegans</name>
    <dbReference type="NCBI Taxonomy" id="6239"/>
    <lineage>
        <taxon>Eukaryota</taxon>
        <taxon>Metazoa</taxon>
        <taxon>Ecdysozoa</taxon>
        <taxon>Nematoda</taxon>
        <taxon>Chromadorea</taxon>
        <taxon>Rhabditida</taxon>
        <taxon>Rhabditina</taxon>
        <taxon>Rhabditomorpha</taxon>
        <taxon>Rhabditoidea</taxon>
        <taxon>Rhabditidae</taxon>
        <taxon>Peloderinae</taxon>
        <taxon>Caenorhabditis</taxon>
    </lineage>
</organism>
<gene>
    <name evidence="11" type="primary">pkc-2</name>
    <name evidence="11" type="synonym">kin-11</name>
    <name evidence="11" type="ORF">E01H11.1</name>
</gene>
<name>KPC2_CAEEL</name>
<keyword id="KW-0025">Alternative splicing</keyword>
<keyword id="KW-0067">ATP-binding</keyword>
<keyword id="KW-0106">Calcium</keyword>
<keyword id="KW-0418">Kinase</keyword>
<keyword id="KW-0479">Metal-binding</keyword>
<keyword id="KW-0547">Nucleotide-binding</keyword>
<keyword id="KW-0597">Phosphoprotein</keyword>
<keyword id="KW-1185">Reference proteome</keyword>
<keyword id="KW-0677">Repeat</keyword>
<keyword id="KW-0723">Serine/threonine-protein kinase</keyword>
<keyword id="KW-0808">Transferase</keyword>
<keyword id="KW-0862">Zinc</keyword>
<keyword id="KW-0863">Zinc-finger</keyword>
<dbReference type="EC" id="2.7.11.13" evidence="7"/>
<dbReference type="EMBL" id="U82935">
    <property type="protein sequence ID" value="AAB40868.1"/>
    <property type="molecule type" value="mRNA"/>
</dbReference>
<dbReference type="EMBL" id="U82936">
    <property type="protein sequence ID" value="AAB40869.1"/>
    <property type="molecule type" value="mRNA"/>
</dbReference>
<dbReference type="EMBL" id="FO080629">
    <property type="protein sequence ID" value="CCD65287.1"/>
    <property type="molecule type" value="Genomic_DNA"/>
</dbReference>
<dbReference type="EMBL" id="FO080629">
    <property type="protein sequence ID" value="CCD65288.1"/>
    <property type="molecule type" value="Genomic_DNA"/>
</dbReference>
<dbReference type="EMBL" id="FO080629">
    <property type="protein sequence ID" value="CCD65289.1"/>
    <property type="molecule type" value="Genomic_DNA"/>
</dbReference>
<dbReference type="PIR" id="T15902">
    <property type="entry name" value="T15902"/>
</dbReference>
<dbReference type="RefSeq" id="NP_001024516.1">
    <molecule id="P90980-2"/>
    <property type="nucleotide sequence ID" value="NM_001029345.6"/>
</dbReference>
<dbReference type="RefSeq" id="NP_001024517.1">
    <molecule id="P90980-1"/>
    <property type="nucleotide sequence ID" value="NM_001029346.4"/>
</dbReference>
<dbReference type="RefSeq" id="NP_001024518.1">
    <property type="nucleotide sequence ID" value="NM_001029347.1"/>
</dbReference>
<dbReference type="SMR" id="P90980"/>
<dbReference type="BioGRID" id="46082">
    <property type="interactions" value="8"/>
</dbReference>
<dbReference type="DIP" id="DIP-24386N"/>
<dbReference type="FunCoup" id="P90980">
    <property type="interactions" value="1341"/>
</dbReference>
<dbReference type="STRING" id="6239.E01H11.1c.1"/>
<dbReference type="PaxDb" id="6239-E01H11.1c"/>
<dbReference type="PeptideAtlas" id="P90980"/>
<dbReference type="EnsemblMetazoa" id="E01H11.1a.1">
    <molecule id="P90980-2"/>
    <property type="protein sequence ID" value="E01H11.1a.1"/>
    <property type="gene ID" value="WBGene00004033"/>
</dbReference>
<dbReference type="EnsemblMetazoa" id="E01H11.1b.1">
    <molecule id="P90980-1"/>
    <property type="protein sequence ID" value="E01H11.1b.1"/>
    <property type="gene ID" value="WBGene00004033"/>
</dbReference>
<dbReference type="EnsemblMetazoa" id="E01H11.1c.1">
    <property type="protein sequence ID" value="E01H11.1c.1"/>
    <property type="gene ID" value="WBGene00004033"/>
</dbReference>
<dbReference type="GeneID" id="181166"/>
<dbReference type="KEGG" id="cel:CELE_E01H11.1"/>
<dbReference type="UCSC" id="E01H11.1d">
    <molecule id="P90980-1"/>
    <property type="organism name" value="c. elegans"/>
</dbReference>
<dbReference type="AGR" id="WB:WBGene00004033"/>
<dbReference type="CTD" id="181166"/>
<dbReference type="WormBase" id="E01H11.1a">
    <molecule id="P90980-2"/>
    <property type="protein sequence ID" value="CE30927"/>
    <property type="gene ID" value="WBGene00004033"/>
    <property type="gene designation" value="pkc-2"/>
</dbReference>
<dbReference type="WormBase" id="E01H11.1b">
    <molecule id="P90980-1"/>
    <property type="protein sequence ID" value="CE30928"/>
    <property type="gene ID" value="WBGene00004033"/>
    <property type="gene designation" value="pkc-2"/>
</dbReference>
<dbReference type="WormBase" id="E01H11.1c">
    <molecule id="P90980-3"/>
    <property type="protein sequence ID" value="CE30929"/>
    <property type="gene ID" value="WBGene00004033"/>
    <property type="gene designation" value="pkc-2"/>
</dbReference>
<dbReference type="eggNOG" id="KOG0696">
    <property type="taxonomic scope" value="Eukaryota"/>
</dbReference>
<dbReference type="GeneTree" id="ENSGT00940000167637"/>
<dbReference type="InParanoid" id="P90980"/>
<dbReference type="OMA" id="VHEIKSH"/>
<dbReference type="OrthoDB" id="63267at2759"/>
<dbReference type="PhylomeDB" id="P90980"/>
<dbReference type="Reactome" id="R-CEL-111933">
    <property type="pathway name" value="Calmodulin induced events"/>
</dbReference>
<dbReference type="Reactome" id="R-CEL-114516">
    <property type="pathway name" value="Disinhibition of SNARE formation"/>
</dbReference>
<dbReference type="Reactome" id="R-CEL-1169091">
    <property type="pathway name" value="Activation of NF-kappaB in B cells"/>
</dbReference>
<dbReference type="Reactome" id="R-CEL-1433559">
    <property type="pathway name" value="Regulation of KIT signaling"/>
</dbReference>
<dbReference type="Reactome" id="R-CEL-2179392">
    <property type="pathway name" value="EGFR Transactivation by Gastrin"/>
</dbReference>
<dbReference type="Reactome" id="R-CEL-3000170">
    <property type="pathway name" value="Syndecan interactions"/>
</dbReference>
<dbReference type="Reactome" id="R-CEL-399997">
    <property type="pathway name" value="Acetylcholine regulates insulin secretion"/>
</dbReference>
<dbReference type="Reactome" id="R-CEL-4419969">
    <property type="pathway name" value="Depolymerization of the Nuclear Lamina"/>
</dbReference>
<dbReference type="Reactome" id="R-CEL-5099900">
    <property type="pathway name" value="WNT5A-dependent internalization of FZD4"/>
</dbReference>
<dbReference type="Reactome" id="R-CEL-5218921">
    <property type="pathway name" value="VEGFR2 mediated cell proliferation"/>
</dbReference>
<dbReference type="Reactome" id="R-CEL-76005">
    <property type="pathway name" value="Response to elevated platelet cytosolic Ca2+"/>
</dbReference>
<dbReference type="PRO" id="PR:P90980"/>
<dbReference type="Proteomes" id="UP000001940">
    <property type="component" value="Chromosome X"/>
</dbReference>
<dbReference type="Bgee" id="WBGene00004033">
    <property type="expression patterns" value="Expressed in larva and 4 other cell types or tissues"/>
</dbReference>
<dbReference type="ExpressionAtlas" id="P90980">
    <property type="expression patterns" value="baseline and differential"/>
</dbReference>
<dbReference type="GO" id="GO:0005829">
    <property type="term" value="C:cytosol"/>
    <property type="evidence" value="ECO:0000314"/>
    <property type="project" value="WormBase"/>
</dbReference>
<dbReference type="GO" id="GO:0016020">
    <property type="term" value="C:membrane"/>
    <property type="evidence" value="ECO:0000314"/>
    <property type="project" value="WormBase"/>
</dbReference>
<dbReference type="GO" id="GO:0043005">
    <property type="term" value="C:neuron projection"/>
    <property type="evidence" value="ECO:0000314"/>
    <property type="project" value="WormBase"/>
</dbReference>
<dbReference type="GO" id="GO:0043025">
    <property type="term" value="C:neuronal cell body"/>
    <property type="evidence" value="ECO:0000314"/>
    <property type="project" value="WormBase"/>
</dbReference>
<dbReference type="GO" id="GO:0005524">
    <property type="term" value="F:ATP binding"/>
    <property type="evidence" value="ECO:0007669"/>
    <property type="project" value="UniProtKB-KW"/>
</dbReference>
<dbReference type="GO" id="GO:0004698">
    <property type="term" value="F:calcium,diacylglycerol-dependent serine/threonine kinase activity"/>
    <property type="evidence" value="ECO:0000314"/>
    <property type="project" value="WormBase"/>
</dbReference>
<dbReference type="GO" id="GO:0004697">
    <property type="term" value="F:diacylglycerol-dependent serine/threonine kinase activity"/>
    <property type="evidence" value="ECO:0000314"/>
    <property type="project" value="WormBase"/>
</dbReference>
<dbReference type="GO" id="GO:0106310">
    <property type="term" value="F:protein serine kinase activity"/>
    <property type="evidence" value="ECO:0000314"/>
    <property type="project" value="WormBase"/>
</dbReference>
<dbReference type="GO" id="GO:0004674">
    <property type="term" value="F:protein serine/threonine kinase activity"/>
    <property type="evidence" value="ECO:0000318"/>
    <property type="project" value="GO_Central"/>
</dbReference>
<dbReference type="GO" id="GO:0008270">
    <property type="term" value="F:zinc ion binding"/>
    <property type="evidence" value="ECO:0007669"/>
    <property type="project" value="UniProtKB-KW"/>
</dbReference>
<dbReference type="GO" id="GO:0035556">
    <property type="term" value="P:intracellular signal transduction"/>
    <property type="evidence" value="ECO:0000318"/>
    <property type="project" value="GO_Central"/>
</dbReference>
<dbReference type="CDD" id="cd20833">
    <property type="entry name" value="C1_cPKC_rpt1"/>
    <property type="match status" value="1"/>
</dbReference>
<dbReference type="CDD" id="cd20836">
    <property type="entry name" value="C1_cPKC_rpt2"/>
    <property type="match status" value="1"/>
</dbReference>
<dbReference type="CDD" id="cd04026">
    <property type="entry name" value="C2_PKC_alpha_gamma"/>
    <property type="match status" value="1"/>
</dbReference>
<dbReference type="CDD" id="cd05587">
    <property type="entry name" value="STKc_cPKC"/>
    <property type="match status" value="1"/>
</dbReference>
<dbReference type="FunFam" id="2.60.40.150:FF:000012">
    <property type="entry name" value="Kinase C alpha type"/>
    <property type="match status" value="1"/>
</dbReference>
<dbReference type="FunFam" id="1.10.510.10:FF:000023">
    <property type="entry name" value="Protein kinase C"/>
    <property type="match status" value="1"/>
</dbReference>
<dbReference type="FunFam" id="3.30.200.20:FF:000080">
    <property type="entry name" value="Protein kinase C"/>
    <property type="match status" value="1"/>
</dbReference>
<dbReference type="FunFam" id="3.30.60.20:FF:000006">
    <property type="entry name" value="Protein kinase C"/>
    <property type="match status" value="1"/>
</dbReference>
<dbReference type="FunFam" id="3.30.60.20:FF:000031">
    <property type="entry name" value="Protein kinase C alpha"/>
    <property type="match status" value="1"/>
</dbReference>
<dbReference type="Gene3D" id="3.30.60.20">
    <property type="match status" value="2"/>
</dbReference>
<dbReference type="Gene3D" id="2.60.40.150">
    <property type="entry name" value="C2 domain"/>
    <property type="match status" value="1"/>
</dbReference>
<dbReference type="Gene3D" id="3.30.200.20">
    <property type="entry name" value="Phosphorylase Kinase, domain 1"/>
    <property type="match status" value="1"/>
</dbReference>
<dbReference type="Gene3D" id="1.10.510.10">
    <property type="entry name" value="Transferase(Phosphotransferase) domain 1"/>
    <property type="match status" value="1"/>
</dbReference>
<dbReference type="InterPro" id="IPR000961">
    <property type="entry name" value="AGC-kinase_C"/>
</dbReference>
<dbReference type="InterPro" id="IPR046349">
    <property type="entry name" value="C1-like_sf"/>
</dbReference>
<dbReference type="InterPro" id="IPR000008">
    <property type="entry name" value="C2_dom"/>
</dbReference>
<dbReference type="InterPro" id="IPR035892">
    <property type="entry name" value="C2_domain_sf"/>
</dbReference>
<dbReference type="InterPro" id="IPR020454">
    <property type="entry name" value="DAG/PE-bd"/>
</dbReference>
<dbReference type="InterPro" id="IPR011009">
    <property type="entry name" value="Kinase-like_dom_sf"/>
</dbReference>
<dbReference type="InterPro" id="IPR002219">
    <property type="entry name" value="PE/DAG-bd"/>
</dbReference>
<dbReference type="InterPro" id="IPR017892">
    <property type="entry name" value="Pkinase_C"/>
</dbReference>
<dbReference type="InterPro" id="IPR000719">
    <property type="entry name" value="Prot_kinase_dom"/>
</dbReference>
<dbReference type="InterPro" id="IPR017441">
    <property type="entry name" value="Protein_kinase_ATP_BS"/>
</dbReference>
<dbReference type="InterPro" id="IPR014375">
    <property type="entry name" value="Protein_kinase_C_a/b/g"/>
</dbReference>
<dbReference type="InterPro" id="IPR008271">
    <property type="entry name" value="Ser/Thr_kinase_AS"/>
</dbReference>
<dbReference type="PANTHER" id="PTHR24351">
    <property type="entry name" value="RIBOSOMAL PROTEIN S6 KINASE"/>
    <property type="match status" value="1"/>
</dbReference>
<dbReference type="Pfam" id="PF00130">
    <property type="entry name" value="C1_1"/>
    <property type="match status" value="2"/>
</dbReference>
<dbReference type="Pfam" id="PF00168">
    <property type="entry name" value="C2"/>
    <property type="match status" value="1"/>
</dbReference>
<dbReference type="Pfam" id="PF00069">
    <property type="entry name" value="Pkinase"/>
    <property type="match status" value="1"/>
</dbReference>
<dbReference type="Pfam" id="PF00433">
    <property type="entry name" value="Pkinase_C"/>
    <property type="match status" value="1"/>
</dbReference>
<dbReference type="PIRSF" id="PIRSF000550">
    <property type="entry name" value="PKC_alpha"/>
    <property type="match status" value="1"/>
</dbReference>
<dbReference type="PRINTS" id="PR00360">
    <property type="entry name" value="C2DOMAIN"/>
</dbReference>
<dbReference type="PRINTS" id="PR00008">
    <property type="entry name" value="DAGPEDOMAIN"/>
</dbReference>
<dbReference type="SMART" id="SM00109">
    <property type="entry name" value="C1"/>
    <property type="match status" value="2"/>
</dbReference>
<dbReference type="SMART" id="SM00239">
    <property type="entry name" value="C2"/>
    <property type="match status" value="1"/>
</dbReference>
<dbReference type="SMART" id="SM00133">
    <property type="entry name" value="S_TK_X"/>
    <property type="match status" value="1"/>
</dbReference>
<dbReference type="SMART" id="SM00220">
    <property type="entry name" value="S_TKc"/>
    <property type="match status" value="1"/>
</dbReference>
<dbReference type="SUPFAM" id="SSF49562">
    <property type="entry name" value="C2 domain (Calcium/lipid-binding domain, CaLB)"/>
    <property type="match status" value="1"/>
</dbReference>
<dbReference type="SUPFAM" id="SSF57889">
    <property type="entry name" value="Cysteine-rich domain"/>
    <property type="match status" value="2"/>
</dbReference>
<dbReference type="SUPFAM" id="SSF56112">
    <property type="entry name" value="Protein kinase-like (PK-like)"/>
    <property type="match status" value="1"/>
</dbReference>
<dbReference type="PROSITE" id="PS51285">
    <property type="entry name" value="AGC_KINASE_CTER"/>
    <property type="match status" value="1"/>
</dbReference>
<dbReference type="PROSITE" id="PS50004">
    <property type="entry name" value="C2"/>
    <property type="match status" value="1"/>
</dbReference>
<dbReference type="PROSITE" id="PS00107">
    <property type="entry name" value="PROTEIN_KINASE_ATP"/>
    <property type="match status" value="1"/>
</dbReference>
<dbReference type="PROSITE" id="PS50011">
    <property type="entry name" value="PROTEIN_KINASE_DOM"/>
    <property type="match status" value="1"/>
</dbReference>
<dbReference type="PROSITE" id="PS00108">
    <property type="entry name" value="PROTEIN_KINASE_ST"/>
    <property type="match status" value="1"/>
</dbReference>
<dbReference type="PROSITE" id="PS00479">
    <property type="entry name" value="ZF_DAG_PE_1"/>
    <property type="match status" value="2"/>
</dbReference>
<dbReference type="PROSITE" id="PS50081">
    <property type="entry name" value="ZF_DAG_PE_2"/>
    <property type="match status" value="2"/>
</dbReference>
<reference key="1">
    <citation type="journal article" date="1997" name="J. Biol. Chem.">
        <title>Structure and expression of the Caenorhabditis elegans protein kinase C2 gene. Origins and regulated expression of a family of Ca2+-activated protein kinase C isoforms.</title>
        <authorList>
            <person name="Islas-Trejo A."/>
            <person name="Land M."/>
            <person name="Tcherepanova I."/>
            <person name="Freedman J.H."/>
            <person name="Rubin C.S."/>
        </authorList>
    </citation>
    <scope>NUCLEOTIDE SEQUENCE [MRNA] (ISOFORMS A AND B)</scope>
    <source>
        <strain>Bristol N2</strain>
    </source>
</reference>
<reference key="2">
    <citation type="journal article" date="1998" name="Science">
        <title>Genome sequence of the nematode C. elegans: a platform for investigating biology.</title>
        <authorList>
            <consortium name="The C. elegans sequencing consortium"/>
        </authorList>
    </citation>
    <scope>NUCLEOTIDE SEQUENCE [LARGE SCALE GENOMIC DNA]</scope>
    <source>
        <strain>Bristol N2</strain>
    </source>
</reference>
<reference key="3">
    <citation type="journal article" date="2012" name="J. Neurosci.">
        <title>PKC-2 phosphorylation of UNC-18 Ser322 in AFD neurons regulates temperature dependency of locomotion.</title>
        <authorList>
            <person name="Edwards M.R."/>
            <person name="Johnson J.R."/>
            <person name="Rankin K."/>
            <person name="Jenkins R.E."/>
            <person name="Maguire C."/>
            <person name="Morgan A."/>
            <person name="Burgoyne R.D."/>
            <person name="Barclay J.W."/>
        </authorList>
    </citation>
    <scope>FUNCTION</scope>
    <scope>CATALYTIC ACTIVITY</scope>
    <scope>DISRUPTION PHENOTYPE</scope>
</reference>
<accession>P90980</accession>
<accession>P90981</accession>
<accession>Q19024</accession>
<accession>Q8MQ87</accession>
<accession>Q8MQ88</accession>
<proteinExistence type="evidence at protein level"/>
<comment type="function">
    <text evidence="7 9">PKC is activated by diacylglycerol which in turn phosphorylates a range of cellular proteins (PubMed:22593072). PKC also serves as the receptor for phorbol esters, a class of tumor promoters (Probable). Through phosphorylation of unc-18 in the AFD thermosensory neuron, plays a role in regulating temperature-dependent locomotion (PubMed:22593072).</text>
</comment>
<comment type="catalytic activity">
    <reaction evidence="7">
        <text>L-seryl-[protein] + ATP = O-phospho-L-seryl-[protein] + ADP + H(+)</text>
        <dbReference type="Rhea" id="RHEA:17989"/>
        <dbReference type="Rhea" id="RHEA-COMP:9863"/>
        <dbReference type="Rhea" id="RHEA-COMP:11604"/>
        <dbReference type="ChEBI" id="CHEBI:15378"/>
        <dbReference type="ChEBI" id="CHEBI:29999"/>
        <dbReference type="ChEBI" id="CHEBI:30616"/>
        <dbReference type="ChEBI" id="CHEBI:83421"/>
        <dbReference type="ChEBI" id="CHEBI:456216"/>
        <dbReference type="EC" id="2.7.11.13"/>
    </reaction>
</comment>
<comment type="catalytic activity">
    <reaction>
        <text>L-threonyl-[protein] + ATP = O-phospho-L-threonyl-[protein] + ADP + H(+)</text>
        <dbReference type="Rhea" id="RHEA:46608"/>
        <dbReference type="Rhea" id="RHEA-COMP:11060"/>
        <dbReference type="Rhea" id="RHEA-COMP:11605"/>
        <dbReference type="ChEBI" id="CHEBI:15378"/>
        <dbReference type="ChEBI" id="CHEBI:30013"/>
        <dbReference type="ChEBI" id="CHEBI:30616"/>
        <dbReference type="ChEBI" id="CHEBI:61977"/>
        <dbReference type="ChEBI" id="CHEBI:456216"/>
        <dbReference type="EC" id="2.7.11.13"/>
    </reaction>
</comment>
<comment type="cofactor">
    <cofactor evidence="1">
        <name>Ca(2+)</name>
        <dbReference type="ChEBI" id="CHEBI:29108"/>
    </cofactor>
    <text evidence="1">Binds 3 Ca(2+) ions per C2 domain.</text>
</comment>
<comment type="alternative products">
    <event type="alternative splicing"/>
    <isoform>
        <id>P90980-1</id>
        <name evidence="11">b</name>
        <name evidence="8">PKC2B</name>
        <sequence type="displayed"/>
    </isoform>
    <isoform>
        <id>P90980-2</id>
        <name evidence="10">a</name>
        <name evidence="8">PKC2A</name>
        <sequence type="described" ref="VSP_009370"/>
    </isoform>
    <isoform>
        <id>P90980-3</id>
        <name evidence="12">c</name>
        <sequence type="described" ref="VSP_009369 VSP_009371"/>
    </isoform>
</comment>
<comment type="disruption phenotype">
    <text evidence="7">Resistant to the acetylcholine esterase inhibitor Aldicarb (PubMed:22593072). Impairs temperature sensitivity, tolerating higher temperatures compared to wild-type (PubMed:22593072).</text>
</comment>
<comment type="similarity">
    <text evidence="9">Belongs to the protein kinase superfamily. AGC Ser/Thr protein kinase family. PKC subfamily.</text>
</comment>
<protein>
    <recommendedName>
        <fullName>Protein kinase C-like 2</fullName>
        <shortName>PKC2</shortName>
        <ecNumber evidence="7">2.7.11.13</ecNumber>
    </recommendedName>
</protein>
<feature type="chain" id="PRO_0000055736" description="Protein kinase C-like 2">
    <location>
        <begin position="1"/>
        <end position="682"/>
    </location>
</feature>
<feature type="domain" description="C2" evidence="1">
    <location>
        <begin position="160"/>
        <end position="278"/>
    </location>
</feature>
<feature type="domain" description="Protein kinase" evidence="2">
    <location>
        <begin position="348"/>
        <end position="609"/>
    </location>
</feature>
<feature type="domain" description="AGC-kinase C-terminal" evidence="4">
    <location>
        <begin position="610"/>
        <end position="681"/>
    </location>
</feature>
<feature type="zinc finger region" description="Phorbol-ester/DAG-type 1" evidence="3">
    <location>
        <begin position="38"/>
        <end position="88"/>
    </location>
</feature>
<feature type="zinc finger region" description="Phorbol-ester/DAG-type 2" evidence="3">
    <location>
        <begin position="103"/>
        <end position="153"/>
    </location>
</feature>
<feature type="region of interest" description="Disordered" evidence="6">
    <location>
        <begin position="312"/>
        <end position="333"/>
    </location>
</feature>
<feature type="active site" description="Proton acceptor" evidence="2 5">
    <location>
        <position position="472"/>
    </location>
</feature>
<feature type="binding site" evidence="1">
    <location>
        <position position="189"/>
    </location>
    <ligand>
        <name>Ca(2+)</name>
        <dbReference type="ChEBI" id="CHEBI:29108"/>
        <label>1</label>
    </ligand>
</feature>
<feature type="binding site" evidence="1">
    <location>
        <position position="189"/>
    </location>
    <ligand>
        <name>Ca(2+)</name>
        <dbReference type="ChEBI" id="CHEBI:29108"/>
        <label>2</label>
    </ligand>
</feature>
<feature type="binding site" evidence="1">
    <location>
        <position position="195"/>
    </location>
    <ligand>
        <name>Ca(2+)</name>
        <dbReference type="ChEBI" id="CHEBI:29108"/>
        <label>1</label>
    </ligand>
</feature>
<feature type="binding site" evidence="1">
    <location>
        <position position="249"/>
    </location>
    <ligand>
        <name>Ca(2+)</name>
        <dbReference type="ChEBI" id="CHEBI:29108"/>
        <label>1</label>
    </ligand>
</feature>
<feature type="binding site" evidence="1">
    <location>
        <position position="249"/>
    </location>
    <ligand>
        <name>Ca(2+)</name>
        <dbReference type="ChEBI" id="CHEBI:29108"/>
        <label>2</label>
    </ligand>
</feature>
<feature type="binding site" evidence="1">
    <location>
        <position position="251"/>
    </location>
    <ligand>
        <name>Ca(2+)</name>
        <dbReference type="ChEBI" id="CHEBI:29108"/>
        <label>1</label>
    </ligand>
</feature>
<feature type="binding site" evidence="1">
    <location>
        <position position="251"/>
    </location>
    <ligand>
        <name>Ca(2+)</name>
        <dbReference type="ChEBI" id="CHEBI:29108"/>
        <label>2</label>
    </ligand>
</feature>
<feature type="binding site" evidence="1">
    <location>
        <position position="251"/>
    </location>
    <ligand>
        <name>Ca(2+)</name>
        <dbReference type="ChEBI" id="CHEBI:29108"/>
        <label>3</label>
    </ligand>
</feature>
<feature type="binding site" evidence="1">
    <location>
        <position position="254"/>
    </location>
    <ligand>
        <name>Ca(2+)</name>
        <dbReference type="ChEBI" id="CHEBI:29108"/>
        <label>3</label>
    </ligand>
</feature>
<feature type="binding site" evidence="1">
    <location>
        <position position="257"/>
    </location>
    <ligand>
        <name>Ca(2+)</name>
        <dbReference type="ChEBI" id="CHEBI:29108"/>
        <label>2</label>
    </ligand>
</feature>
<feature type="binding site" evidence="1">
    <location>
        <position position="257"/>
    </location>
    <ligand>
        <name>Ca(2+)</name>
        <dbReference type="ChEBI" id="CHEBI:29108"/>
        <label>3</label>
    </ligand>
</feature>
<feature type="binding site" evidence="2">
    <location>
        <begin position="354"/>
        <end position="362"/>
    </location>
    <ligand>
        <name>ATP</name>
        <dbReference type="ChEBI" id="CHEBI:30616"/>
    </ligand>
</feature>
<feature type="binding site" evidence="2">
    <location>
        <position position="377"/>
    </location>
    <ligand>
        <name>ATP</name>
        <dbReference type="ChEBI" id="CHEBI:30616"/>
    </ligand>
</feature>
<feature type="splice variant" id="VSP_009369" description="In isoform c." evidence="9">
    <original>MSLSTNSSVKEDE</original>
    <variation>MSLRPKQKSSSTSVFLKSHKFSLTSHILRKAKKRETMDSAERRRSETDIGGGPRNSADARPSLDLSSDPMLESNLALRKLSEAFAAAALISPVKNNSTGGGGNQQLCIRKSISNPSSLKVYAHHEAPGIIHFPRFEFSHRLSIRPLLKRLHEQ</variation>
    <location>
        <begin position="1"/>
        <end position="13"/>
    </location>
</feature>
<feature type="splice variant" id="VSP_009370" description="In isoform a." evidence="8">
    <original>TDRSTENFDHSFLKLPTKMTPPDWEVLENLKGDEFSNFSFVNPFYVKDVEP</original>
    <variation>SADDTSNFDSEFTHEVPKLTPIDRLFLMNLDQTEFEGFSFVNPEYVQEC</variation>
    <location>
        <begin position="632"/>
        <end position="682"/>
    </location>
</feature>
<feature type="splice variant" id="VSP_009371" description="In isoform c." evidence="9">
    <original>P</original>
    <variation>PHIFYVLFIFLILRPFLLLPYLSHLQLTLSAIHSPLLLLSASVFFKFLFKNNFSQSPYNKIKVLLKSADDTSNFDSEFTHEVPKLTPIDRLFLMNLDQTEFEGFSFVNPEYVQEC</variation>
    <location>
        <position position="682"/>
    </location>
</feature>
<feature type="sequence conflict" description="In Ref. 1; AAB40868/AAB40869." evidence="9" ref="1">
    <original>C</original>
    <variation>W</variation>
    <location>
        <position position="200"/>
    </location>
</feature>